<sequence length="179" mass="20158">MSRLQEFYKSKVVADLQAKFGYKCVMEVPRITKITLNMGVSEAVADKKVIEHAVSDLTKISGQKPVVTKTRKAIAGFKIRENYPIGCMVTLRGQRMYEFLDRLVAVALPRVRDFRGISGRAFDGRGNYNIGVKEQIIFPEIEYDKIDALRGLNISITTTAKTDDEAKALLTAFSFPFRN</sequence>
<dbReference type="EMBL" id="BX640423">
    <property type="protein sequence ID" value="CAE39784.1"/>
    <property type="molecule type" value="Genomic_DNA"/>
</dbReference>
<dbReference type="RefSeq" id="WP_003806918.1">
    <property type="nucleotide sequence ID" value="NC_002928.3"/>
</dbReference>
<dbReference type="SMR" id="Q7W2E3"/>
<dbReference type="GeneID" id="93206273"/>
<dbReference type="KEGG" id="bpa:BPP0043"/>
<dbReference type="HOGENOM" id="CLU_061015_2_1_4"/>
<dbReference type="Proteomes" id="UP000001421">
    <property type="component" value="Chromosome"/>
</dbReference>
<dbReference type="GO" id="GO:1990904">
    <property type="term" value="C:ribonucleoprotein complex"/>
    <property type="evidence" value="ECO:0007669"/>
    <property type="project" value="UniProtKB-KW"/>
</dbReference>
<dbReference type="GO" id="GO:0005840">
    <property type="term" value="C:ribosome"/>
    <property type="evidence" value="ECO:0007669"/>
    <property type="project" value="UniProtKB-KW"/>
</dbReference>
<dbReference type="GO" id="GO:0019843">
    <property type="term" value="F:rRNA binding"/>
    <property type="evidence" value="ECO:0007669"/>
    <property type="project" value="UniProtKB-UniRule"/>
</dbReference>
<dbReference type="GO" id="GO:0003735">
    <property type="term" value="F:structural constituent of ribosome"/>
    <property type="evidence" value="ECO:0007669"/>
    <property type="project" value="InterPro"/>
</dbReference>
<dbReference type="GO" id="GO:0000049">
    <property type="term" value="F:tRNA binding"/>
    <property type="evidence" value="ECO:0007669"/>
    <property type="project" value="UniProtKB-UniRule"/>
</dbReference>
<dbReference type="GO" id="GO:0006412">
    <property type="term" value="P:translation"/>
    <property type="evidence" value="ECO:0007669"/>
    <property type="project" value="UniProtKB-UniRule"/>
</dbReference>
<dbReference type="FunFam" id="3.30.1440.10:FF:000001">
    <property type="entry name" value="50S ribosomal protein L5"/>
    <property type="match status" value="1"/>
</dbReference>
<dbReference type="Gene3D" id="3.30.1440.10">
    <property type="match status" value="1"/>
</dbReference>
<dbReference type="HAMAP" id="MF_01333_B">
    <property type="entry name" value="Ribosomal_uL5_B"/>
    <property type="match status" value="1"/>
</dbReference>
<dbReference type="InterPro" id="IPR002132">
    <property type="entry name" value="Ribosomal_uL5"/>
</dbReference>
<dbReference type="InterPro" id="IPR020930">
    <property type="entry name" value="Ribosomal_uL5_bac-type"/>
</dbReference>
<dbReference type="InterPro" id="IPR031309">
    <property type="entry name" value="Ribosomal_uL5_C"/>
</dbReference>
<dbReference type="InterPro" id="IPR020929">
    <property type="entry name" value="Ribosomal_uL5_CS"/>
</dbReference>
<dbReference type="InterPro" id="IPR022803">
    <property type="entry name" value="Ribosomal_uL5_dom_sf"/>
</dbReference>
<dbReference type="InterPro" id="IPR031310">
    <property type="entry name" value="Ribosomal_uL5_N"/>
</dbReference>
<dbReference type="NCBIfam" id="NF000585">
    <property type="entry name" value="PRK00010.1"/>
    <property type="match status" value="1"/>
</dbReference>
<dbReference type="PANTHER" id="PTHR11994">
    <property type="entry name" value="60S RIBOSOMAL PROTEIN L11-RELATED"/>
    <property type="match status" value="1"/>
</dbReference>
<dbReference type="Pfam" id="PF00281">
    <property type="entry name" value="Ribosomal_L5"/>
    <property type="match status" value="1"/>
</dbReference>
<dbReference type="Pfam" id="PF00673">
    <property type="entry name" value="Ribosomal_L5_C"/>
    <property type="match status" value="1"/>
</dbReference>
<dbReference type="PIRSF" id="PIRSF002161">
    <property type="entry name" value="Ribosomal_L5"/>
    <property type="match status" value="1"/>
</dbReference>
<dbReference type="SUPFAM" id="SSF55282">
    <property type="entry name" value="RL5-like"/>
    <property type="match status" value="1"/>
</dbReference>
<dbReference type="PROSITE" id="PS00358">
    <property type="entry name" value="RIBOSOMAL_L5"/>
    <property type="match status" value="1"/>
</dbReference>
<reference key="1">
    <citation type="journal article" date="2003" name="Nat. Genet.">
        <title>Comparative analysis of the genome sequences of Bordetella pertussis, Bordetella parapertussis and Bordetella bronchiseptica.</title>
        <authorList>
            <person name="Parkhill J."/>
            <person name="Sebaihia M."/>
            <person name="Preston A."/>
            <person name="Murphy L.D."/>
            <person name="Thomson N.R."/>
            <person name="Harris D.E."/>
            <person name="Holden M.T.G."/>
            <person name="Churcher C.M."/>
            <person name="Bentley S.D."/>
            <person name="Mungall K.L."/>
            <person name="Cerdeno-Tarraga A.-M."/>
            <person name="Temple L."/>
            <person name="James K.D."/>
            <person name="Harris B."/>
            <person name="Quail M.A."/>
            <person name="Achtman M."/>
            <person name="Atkin R."/>
            <person name="Baker S."/>
            <person name="Basham D."/>
            <person name="Bason N."/>
            <person name="Cherevach I."/>
            <person name="Chillingworth T."/>
            <person name="Collins M."/>
            <person name="Cronin A."/>
            <person name="Davis P."/>
            <person name="Doggett J."/>
            <person name="Feltwell T."/>
            <person name="Goble A."/>
            <person name="Hamlin N."/>
            <person name="Hauser H."/>
            <person name="Holroyd S."/>
            <person name="Jagels K."/>
            <person name="Leather S."/>
            <person name="Moule S."/>
            <person name="Norberczak H."/>
            <person name="O'Neil S."/>
            <person name="Ormond D."/>
            <person name="Price C."/>
            <person name="Rabbinowitsch E."/>
            <person name="Rutter S."/>
            <person name="Sanders M."/>
            <person name="Saunders D."/>
            <person name="Seeger K."/>
            <person name="Sharp S."/>
            <person name="Simmonds M."/>
            <person name="Skelton J."/>
            <person name="Squares R."/>
            <person name="Squares S."/>
            <person name="Stevens K."/>
            <person name="Unwin L."/>
            <person name="Whitehead S."/>
            <person name="Barrell B.G."/>
            <person name="Maskell D.J."/>
        </authorList>
    </citation>
    <scope>NUCLEOTIDE SEQUENCE [LARGE SCALE GENOMIC DNA]</scope>
    <source>
        <strain>12822 / ATCC BAA-587 / NCTC 13253</strain>
    </source>
</reference>
<comment type="function">
    <text evidence="1">This is one of the proteins that bind and probably mediate the attachment of the 5S RNA into the large ribosomal subunit, where it forms part of the central protuberance. In the 70S ribosome it contacts protein S13 of the 30S subunit (bridge B1b), connecting the 2 subunits; this bridge is implicated in subunit movement. Contacts the P site tRNA; the 5S rRNA and some of its associated proteins might help stabilize positioning of ribosome-bound tRNAs.</text>
</comment>
<comment type="subunit">
    <text evidence="1">Part of the 50S ribosomal subunit; part of the 5S rRNA/L5/L18/L25 subcomplex. Contacts the 5S rRNA and the P site tRNA. Forms a bridge to the 30S subunit in the 70S ribosome.</text>
</comment>
<comment type="similarity">
    <text evidence="1">Belongs to the universal ribosomal protein uL5 family.</text>
</comment>
<protein>
    <recommendedName>
        <fullName evidence="1">Large ribosomal subunit protein uL5</fullName>
    </recommendedName>
    <alternativeName>
        <fullName evidence="2">50S ribosomal protein L5</fullName>
    </alternativeName>
</protein>
<organism>
    <name type="scientific">Bordetella parapertussis (strain 12822 / ATCC BAA-587 / NCTC 13253)</name>
    <dbReference type="NCBI Taxonomy" id="257311"/>
    <lineage>
        <taxon>Bacteria</taxon>
        <taxon>Pseudomonadati</taxon>
        <taxon>Pseudomonadota</taxon>
        <taxon>Betaproteobacteria</taxon>
        <taxon>Burkholderiales</taxon>
        <taxon>Alcaligenaceae</taxon>
        <taxon>Bordetella</taxon>
    </lineage>
</organism>
<proteinExistence type="inferred from homology"/>
<evidence type="ECO:0000255" key="1">
    <source>
        <dbReference type="HAMAP-Rule" id="MF_01333"/>
    </source>
</evidence>
<evidence type="ECO:0000305" key="2"/>
<keyword id="KW-0687">Ribonucleoprotein</keyword>
<keyword id="KW-0689">Ribosomal protein</keyword>
<keyword id="KW-0694">RNA-binding</keyword>
<keyword id="KW-0699">rRNA-binding</keyword>
<keyword id="KW-0820">tRNA-binding</keyword>
<feature type="chain" id="PRO_0000124898" description="Large ribosomal subunit protein uL5">
    <location>
        <begin position="1"/>
        <end position="179"/>
    </location>
</feature>
<name>RL5_BORPA</name>
<accession>Q7W2E3</accession>
<gene>
    <name evidence="1" type="primary">rplE</name>
    <name type="ordered locus">BPP0043</name>
</gene>